<reference evidence="6" key="1">
    <citation type="journal article" date="2000" name="Dev. Biol.">
        <title>Targets of TGF-beta signaling in Caenorhabditis elegans dauer formation.</title>
        <authorList>
            <person name="Inoue T."/>
            <person name="Thomas J.H."/>
        </authorList>
    </citation>
    <scope>NUCLEOTIDE SEQUENCE [MRNA] (ISOFORM A)</scope>
    <scope>FUNCTION</scope>
    <scope>DEVELOPMENTAL STAGE</scope>
    <scope>MUTAGENESIS OF 236-GLN--SER-331; GLY-286 AND 302-TRP--SER-331</scope>
    <source>
        <strain evidence="6">Bristol N2</strain>
    </source>
</reference>
<reference evidence="7" key="2">
    <citation type="journal article" date="1998" name="Science">
        <title>Genome sequence of the nematode C. elegans: a platform for investigating biology.</title>
        <authorList>
            <consortium name="The C. elegans sequencing consortium"/>
        </authorList>
    </citation>
    <scope>NUCLEOTIDE SEQUENCE [LARGE SCALE GENOMIC DNA]</scope>
    <source>
        <strain evidence="7">Bristol N2</strain>
    </source>
</reference>
<reference evidence="5" key="3">
    <citation type="journal article" date="2010" name="Development">
        <title>Antagonistic Smad transcription factors control the dauer/non-dauer switch in C. elegans.</title>
        <authorList>
            <person name="Park D."/>
            <person name="Estevez A."/>
            <person name="Riddle D.L."/>
        </authorList>
    </citation>
    <scope>FUNCTION</scope>
    <scope>INTERACTION WITH DAF-8 AND DAF-3</scope>
</reference>
<name>DAF14_CAEEL</name>
<proteinExistence type="evidence at protein level"/>
<organism evidence="7">
    <name type="scientific">Caenorhabditis elegans</name>
    <dbReference type="NCBI Taxonomy" id="6239"/>
    <lineage>
        <taxon>Eukaryota</taxon>
        <taxon>Metazoa</taxon>
        <taxon>Ecdysozoa</taxon>
        <taxon>Nematoda</taxon>
        <taxon>Chromadorea</taxon>
        <taxon>Rhabditida</taxon>
        <taxon>Rhabditina</taxon>
        <taxon>Rhabditomorpha</taxon>
        <taxon>Rhabditoidea</taxon>
        <taxon>Rhabditidae</taxon>
        <taxon>Peloderinae</taxon>
        <taxon>Caenorhabditis</taxon>
    </lineage>
</organism>
<comment type="function">
    <text evidence="3 4">Probably an atypical receptor-regulated SMAD (R-SMAD) that is an intracellular signal transducer and transcriptional modulator activated by TGF-beta-like daf-7 signaling (PubMed:10625546). Plays a role in TGF-beta-like daf-7 signaling in regulating entry into a developmentally arrested larval state known as dauer, in response to harsh environmental conditions; partially redundant with R-SMAD daf-8 (PubMed:10625546, PubMed:20081192).</text>
</comment>
<comment type="subunit">
    <text evidence="4">Interacts with R-SMAD daf-8 and co-SMAD daf-3 (PubMed:20081192). Interacts with daf-3 in a daf-8 dependent manner (PubMed:20081192).</text>
</comment>
<comment type="alternative products">
    <event type="alternative splicing"/>
    <isoform>
        <id>F5GUE5-1</id>
        <name evidence="9">b</name>
        <sequence type="displayed"/>
    </isoform>
    <isoform>
        <id>F5GUE5-2</id>
        <name evidence="8">a</name>
        <sequence type="described" ref="VSP_060999"/>
    </isoform>
</comment>
<comment type="developmental stage">
    <text evidence="3">Widely expressed in all stages from the embryo to the adult in a complex and dynamic pattern (PubMed:10625546). In L1 and L2 stage larvae, expressed in intestinal cells, lateral hypodermal cells, the anal sphincter muscle, phasmid sheath cells, neurons in the lateral ganglia, and the excretory duct cell (PubMed:10625546).</text>
</comment>
<gene>
    <name evidence="9" type="primary">daf-14</name>
    <name evidence="9" type="ORF">F01G10.8</name>
</gene>
<dbReference type="EMBL" id="AF190910">
    <property type="protein sequence ID" value="AAF03892.1"/>
    <property type="molecule type" value="mRNA"/>
</dbReference>
<dbReference type="EMBL" id="BX284604">
    <property type="protein sequence ID" value="CAB02890.3"/>
    <property type="molecule type" value="Genomic_DNA"/>
</dbReference>
<dbReference type="EMBL" id="BX284604">
    <property type="protein sequence ID" value="CCA65544.1"/>
    <property type="molecule type" value="Genomic_DNA"/>
</dbReference>
<dbReference type="PIR" id="T20474">
    <property type="entry name" value="T20474"/>
</dbReference>
<dbReference type="RefSeq" id="NP_001255475.1">
    <molecule id="F5GUE5-1"/>
    <property type="nucleotide sequence ID" value="NM_001268546.3"/>
</dbReference>
<dbReference type="RefSeq" id="NP_001255476.1">
    <molecule id="F5GUE5-2"/>
    <property type="nucleotide sequence ID" value="NM_001268547.2"/>
</dbReference>
<dbReference type="SMR" id="F5GUE5"/>
<dbReference type="FunCoup" id="F5GUE5">
    <property type="interactions" value="8"/>
</dbReference>
<dbReference type="STRING" id="6239.F01G10.8b.1"/>
<dbReference type="PaxDb" id="6239-F01G10.8b"/>
<dbReference type="EnsemblMetazoa" id="F01G10.8a.1">
    <molecule id="F5GUE5-2"/>
    <property type="protein sequence ID" value="F01G10.8a.1"/>
    <property type="gene ID" value="WBGene00000910"/>
</dbReference>
<dbReference type="EnsemblMetazoa" id="F01G10.8b.1">
    <molecule id="F5GUE5-1"/>
    <property type="protein sequence ID" value="F01G10.8b.1"/>
    <property type="gene ID" value="WBGene00000910"/>
</dbReference>
<dbReference type="GeneID" id="177908"/>
<dbReference type="KEGG" id="cel:CELE_F01G10.8"/>
<dbReference type="AGR" id="WB:WBGene00000910"/>
<dbReference type="CTD" id="177908"/>
<dbReference type="WormBase" id="F01G10.8a">
    <molecule id="F5GUE5-2"/>
    <property type="protein sequence ID" value="CE29090"/>
    <property type="gene ID" value="WBGene00000910"/>
    <property type="gene designation" value="daf-14"/>
</dbReference>
<dbReference type="WormBase" id="F01G10.8b">
    <molecule id="F5GUE5-1"/>
    <property type="protein sequence ID" value="CE45907"/>
    <property type="gene ID" value="WBGene00000910"/>
    <property type="gene designation" value="daf-14"/>
</dbReference>
<dbReference type="eggNOG" id="KOG3701">
    <property type="taxonomic scope" value="Eukaryota"/>
</dbReference>
<dbReference type="GeneTree" id="ENSGT00940000171601"/>
<dbReference type="HOGENOM" id="CLU_052086_0_0_1"/>
<dbReference type="InParanoid" id="F5GUE5"/>
<dbReference type="OMA" id="CAARISF"/>
<dbReference type="OrthoDB" id="5875866at2759"/>
<dbReference type="PhylomeDB" id="F5GUE5"/>
<dbReference type="Reactome" id="R-CEL-201451">
    <property type="pathway name" value="Signaling by BMP"/>
</dbReference>
<dbReference type="Reactome" id="R-CEL-5689880">
    <property type="pathway name" value="Ub-specific processing proteases"/>
</dbReference>
<dbReference type="Reactome" id="R-CEL-8941326">
    <property type="pathway name" value="RUNX2 regulates bone development"/>
</dbReference>
<dbReference type="SignaLink" id="F5GUE5"/>
<dbReference type="PRO" id="PR:F5GUE5"/>
<dbReference type="Proteomes" id="UP000001940">
    <property type="component" value="Chromosome IV"/>
</dbReference>
<dbReference type="Bgee" id="WBGene00000910">
    <property type="expression patterns" value="Expressed in larva and 3 other cell types or tissues"/>
</dbReference>
<dbReference type="ExpressionAtlas" id="F5GUE5">
    <property type="expression patterns" value="baseline and differential"/>
</dbReference>
<dbReference type="GO" id="GO:0071144">
    <property type="term" value="C:heteromeric SMAD protein complex"/>
    <property type="evidence" value="ECO:0000318"/>
    <property type="project" value="GO_Central"/>
</dbReference>
<dbReference type="GO" id="GO:0000981">
    <property type="term" value="F:DNA-binding transcription factor activity, RNA polymerase II-specific"/>
    <property type="evidence" value="ECO:0000318"/>
    <property type="project" value="GO_Central"/>
</dbReference>
<dbReference type="GO" id="GO:0070411">
    <property type="term" value="F:I-SMAD binding"/>
    <property type="evidence" value="ECO:0000318"/>
    <property type="project" value="GO_Central"/>
</dbReference>
<dbReference type="GO" id="GO:0000978">
    <property type="term" value="F:RNA polymerase II cis-regulatory region sequence-specific DNA binding"/>
    <property type="evidence" value="ECO:0000318"/>
    <property type="project" value="GO_Central"/>
</dbReference>
<dbReference type="GO" id="GO:0009653">
    <property type="term" value="P:anatomical structure morphogenesis"/>
    <property type="evidence" value="ECO:0000318"/>
    <property type="project" value="GO_Central"/>
</dbReference>
<dbReference type="GO" id="GO:0030509">
    <property type="term" value="P:BMP signaling pathway"/>
    <property type="evidence" value="ECO:0000318"/>
    <property type="project" value="GO_Central"/>
</dbReference>
<dbReference type="GO" id="GO:0030154">
    <property type="term" value="P:cell differentiation"/>
    <property type="evidence" value="ECO:0000318"/>
    <property type="project" value="GO_Central"/>
</dbReference>
<dbReference type="GO" id="GO:0040024">
    <property type="term" value="P:dauer larval development"/>
    <property type="evidence" value="ECO:0000315"/>
    <property type="project" value="WormBase"/>
</dbReference>
<dbReference type="GO" id="GO:0008340">
    <property type="term" value="P:determination of adult lifespan"/>
    <property type="evidence" value="ECO:0000315"/>
    <property type="project" value="WormBase"/>
</dbReference>
<dbReference type="GO" id="GO:0018991">
    <property type="term" value="P:egg-laying behavior"/>
    <property type="evidence" value="ECO:0000315"/>
    <property type="project" value="WormBase"/>
</dbReference>
<dbReference type="GO" id="GO:0061067">
    <property type="term" value="P:negative regulation of dauer larval development"/>
    <property type="evidence" value="ECO:0000315"/>
    <property type="project" value="WormBase"/>
</dbReference>
<dbReference type="GO" id="GO:0043476">
    <property type="term" value="P:pigment accumulation"/>
    <property type="evidence" value="ECO:0000315"/>
    <property type="project" value="WormBase"/>
</dbReference>
<dbReference type="GO" id="GO:0061065">
    <property type="term" value="P:regulation of dauer larval development"/>
    <property type="evidence" value="ECO:0000315"/>
    <property type="project" value="UniProtKB"/>
</dbReference>
<dbReference type="GO" id="GO:0006357">
    <property type="term" value="P:regulation of transcription by RNA polymerase II"/>
    <property type="evidence" value="ECO:0000318"/>
    <property type="project" value="GO_Central"/>
</dbReference>
<dbReference type="GO" id="GO:0060395">
    <property type="term" value="P:SMAD protein signal transduction"/>
    <property type="evidence" value="ECO:0000318"/>
    <property type="project" value="GO_Central"/>
</dbReference>
<dbReference type="GO" id="GO:0035176">
    <property type="term" value="P:social behavior"/>
    <property type="evidence" value="ECO:0000315"/>
    <property type="project" value="WormBase"/>
</dbReference>
<dbReference type="Gene3D" id="2.60.200.10">
    <property type="match status" value="1"/>
</dbReference>
<dbReference type="InterPro" id="IPR013790">
    <property type="entry name" value="Dwarfin"/>
</dbReference>
<dbReference type="InterPro" id="IPR017855">
    <property type="entry name" value="SMAD-like_dom_sf"/>
</dbReference>
<dbReference type="InterPro" id="IPR001132">
    <property type="entry name" value="SMAD_dom_Dwarfin-type"/>
</dbReference>
<dbReference type="InterPro" id="IPR008984">
    <property type="entry name" value="SMAD_FHA_dom_sf"/>
</dbReference>
<dbReference type="PANTHER" id="PTHR13703:SF61">
    <property type="entry name" value="PROTEIN MOTHERS AGAINST DPP"/>
    <property type="match status" value="1"/>
</dbReference>
<dbReference type="PANTHER" id="PTHR13703">
    <property type="entry name" value="SMAD"/>
    <property type="match status" value="1"/>
</dbReference>
<dbReference type="Pfam" id="PF03166">
    <property type="entry name" value="MH2"/>
    <property type="match status" value="1"/>
</dbReference>
<dbReference type="SMART" id="SM00524">
    <property type="entry name" value="DWB"/>
    <property type="match status" value="1"/>
</dbReference>
<dbReference type="SUPFAM" id="SSF49879">
    <property type="entry name" value="SMAD/FHA domain"/>
    <property type="match status" value="1"/>
</dbReference>
<dbReference type="PROSITE" id="PS51076">
    <property type="entry name" value="MH2"/>
    <property type="match status" value="1"/>
</dbReference>
<protein>
    <recommendedName>
        <fullName evidence="5">Smad-related protein daf-14</fullName>
    </recommendedName>
    <alternativeName>
        <fullName evidence="9">Abnormal dauer formation protein 14</fullName>
    </alternativeName>
</protein>
<accession>F5GUE5</accession>
<accession>G5EEP2</accession>
<evidence type="ECO:0000255" key="1">
    <source>
        <dbReference type="PROSITE-ProRule" id="PRU00439"/>
    </source>
</evidence>
<evidence type="ECO:0000256" key="2">
    <source>
        <dbReference type="SAM" id="MobiDB-lite"/>
    </source>
</evidence>
<evidence type="ECO:0000269" key="3">
    <source>
    </source>
</evidence>
<evidence type="ECO:0000269" key="4">
    <source>
    </source>
</evidence>
<evidence type="ECO:0000305" key="5"/>
<evidence type="ECO:0000312" key="6">
    <source>
        <dbReference type="EMBL" id="AAF03892.1"/>
    </source>
</evidence>
<evidence type="ECO:0000312" key="7">
    <source>
        <dbReference type="Proteomes" id="UP000001940"/>
    </source>
</evidence>
<evidence type="ECO:0000312" key="8">
    <source>
        <dbReference type="WormBase" id="F01G10.8a"/>
    </source>
</evidence>
<evidence type="ECO:0000312" key="9">
    <source>
        <dbReference type="WormBase" id="F01G10.8b"/>
    </source>
</evidence>
<sequence length="331" mass="37590">MSNEQEDFGSLFNNQGELGIMDDFAEFGFQTTTTPTNWAAAGNYMYPDQVHLPASINNPNMPINDWLEDAPMPDCYNVPSTSTDENNDPFPFSNISSQSSLKPKTPEKAVVEVRPTGNEMLDPEPKYPKEEKPWCTIFYYELTVRLGKAFEAKVPTITIDGATGASDECRMSLTSQPSSRNSKSSQIRNTVGAGIQLAYENGELWLTVLTDQIVFVQCPFLNQTLNKPLKYVFRLQNKGDQKRMKIFDKEQFEQEKTLALGPLTEKEVADERMRIFSNIRVSFCKGFGETYSRLKVVNLPCWIEIILHEPADEYDTVFRINNERPEIGSRS</sequence>
<feature type="chain" id="PRO_0000452405" description="Smad-related protein daf-14">
    <location>
        <begin position="1"/>
        <end position="331"/>
    </location>
</feature>
<feature type="domain" description="MH2" evidence="1">
    <location>
        <begin position="134"/>
        <end position="331"/>
    </location>
</feature>
<feature type="region of interest" description="Disordered" evidence="2">
    <location>
        <begin position="168"/>
        <end position="187"/>
    </location>
</feature>
<feature type="compositionally biased region" description="Low complexity" evidence="2">
    <location>
        <begin position="175"/>
        <end position="185"/>
    </location>
</feature>
<feature type="splice variant" id="VSP_060999" description="In isoform a." evidence="5">
    <location>
        <begin position="1"/>
        <end position="44"/>
    </location>
</feature>
<feature type="mutagenesis site" description="In m77; constitutive dauer formation at 25 degrees Celsius, an egg laying defect (Egl), abnormal social aggregation - also known as clumping behavior (Cpy), and a dark intestine (Din)." evidence="3 4">
    <location>
        <begin position="236"/>
        <end position="331"/>
    </location>
</feature>
<feature type="mutagenesis site" description="In sa340; constitutive dauer formation at 25 degrees Celsius, an egg laying defect (Egl), abnormal social aggregation - also known as clumping behavior (Cpy), and a dark intestine (Din)." evidence="3">
    <original>G</original>
    <variation>E</variation>
    <location>
        <position position="286"/>
    </location>
</feature>
<feature type="mutagenesis site" description="In sa535; constitutive dauer formation at 25 degrees Celsius, an egg laying defect (Egl), abnormal social aggregation - also known as clumping behavior (Cpy), and a dark intestine (Din)." evidence="3">
    <location>
        <begin position="302"/>
        <end position="331"/>
    </location>
</feature>
<keyword id="KW-0025">Alternative splicing</keyword>
<keyword id="KW-1185">Reference proteome</keyword>
<keyword id="KW-0804">Transcription</keyword>
<keyword id="KW-0805">Transcription regulation</keyword>